<proteinExistence type="inferred from homology"/>
<sequence>MNPSHPAVHPVEAPPTDVHHAPRVRMKDYQGMPGTLGGLALRLGQFCFAVVAFSIMLSTDDFSTVTAFCYLVAATVLQCLWSLALAVIDGYALLVKRSLRNSLVVSLFVVGDGVTATLTFAAACASAGITVLIGNDLRECDQNHCGKYETATAMAFLSWFMVSPSFLLTFWLLASR</sequence>
<protein>
    <recommendedName>
        <fullName>CASP-like protein 5A1</fullName>
        <shortName>GbCASPL5A1</shortName>
    </recommendedName>
</protein>
<dbReference type="GO" id="GO:0005886">
    <property type="term" value="C:plasma membrane"/>
    <property type="evidence" value="ECO:0007669"/>
    <property type="project" value="UniProtKB-SubCell"/>
</dbReference>
<dbReference type="InterPro" id="IPR006702">
    <property type="entry name" value="CASP_dom"/>
</dbReference>
<dbReference type="InterPro" id="IPR045009">
    <property type="entry name" value="CASPL-5"/>
</dbReference>
<dbReference type="PANTHER" id="PTHR32021:SF1">
    <property type="entry name" value="CASP-LIKE PROTEIN 5A1"/>
    <property type="match status" value="1"/>
</dbReference>
<dbReference type="PANTHER" id="PTHR32021">
    <property type="entry name" value="CASP-LIKE PROTEIN 5B3"/>
    <property type="match status" value="1"/>
</dbReference>
<dbReference type="Pfam" id="PF04535">
    <property type="entry name" value="CASP_dom"/>
    <property type="match status" value="1"/>
</dbReference>
<gene>
    <name type="ORF">gba_locus_10451</name>
</gene>
<reference key="1">
    <citation type="journal article" date="2005" name="Plant Physiol.">
        <title>Comparative plant genomics resources at PlantGDB.</title>
        <authorList>
            <person name="Dong Q."/>
            <person name="Lawrence C.J."/>
            <person name="Schlueter S.D."/>
            <person name="Wilkerson M.D."/>
            <person name="Kurtz S."/>
            <person name="Lushbough C."/>
            <person name="Brendel V."/>
        </authorList>
    </citation>
    <scope>NUCLEOTIDE SEQUENCE [LARGE SCALE MRNA]</scope>
</reference>
<reference key="2">
    <citation type="journal article" date="2014" name="Plant Physiol.">
        <title>Functional and evolutionary analysis of the CASPARIAN STRIP MEMBRANE DOMAIN PROTEIN family.</title>
        <authorList>
            <person name="Roppolo D."/>
            <person name="Boeckmann B."/>
            <person name="Pfister A."/>
            <person name="Boutet E."/>
            <person name="Rubio M.C."/>
            <person name="Denervaud-Tendon V."/>
            <person name="Vermeer J.E."/>
            <person name="Gheyselinck J."/>
            <person name="Xenarios I."/>
            <person name="Geldner N."/>
        </authorList>
    </citation>
    <scope>GENE FAMILY</scope>
    <scope>NOMENCLATURE</scope>
</reference>
<organism>
    <name type="scientific">Ginkgo biloba</name>
    <name type="common">Ginkgo</name>
    <name type="synonym">Maidenhair tree</name>
    <dbReference type="NCBI Taxonomy" id="3311"/>
    <lineage>
        <taxon>Eukaryota</taxon>
        <taxon>Viridiplantae</taxon>
        <taxon>Streptophyta</taxon>
        <taxon>Embryophyta</taxon>
        <taxon>Tracheophyta</taxon>
        <taxon>Spermatophyta</taxon>
        <taxon>Ginkgoidae</taxon>
        <taxon>Ginkgoales</taxon>
        <taxon>Ginkgoaceae</taxon>
        <taxon>Ginkgo</taxon>
    </lineage>
</organism>
<feature type="chain" id="PRO_0000418708" description="CASP-like protein 5A1">
    <location>
        <begin position="1"/>
        <end position="176"/>
    </location>
</feature>
<feature type="topological domain" description="Cytoplasmic" evidence="2">
    <location>
        <begin position="1"/>
        <end position="35"/>
    </location>
</feature>
<feature type="transmembrane region" description="Helical" evidence="2">
    <location>
        <begin position="36"/>
        <end position="56"/>
    </location>
</feature>
<feature type="topological domain" description="Extracellular" evidence="2">
    <location>
        <begin position="57"/>
        <end position="67"/>
    </location>
</feature>
<feature type="transmembrane region" description="Helical" evidence="2">
    <location>
        <begin position="68"/>
        <end position="88"/>
    </location>
</feature>
<feature type="topological domain" description="Cytoplasmic" evidence="2">
    <location>
        <begin position="89"/>
        <end position="102"/>
    </location>
</feature>
<feature type="transmembrane region" description="Helical" evidence="2">
    <location>
        <begin position="103"/>
        <end position="123"/>
    </location>
</feature>
<feature type="topological domain" description="Extracellular" evidence="2">
    <location>
        <begin position="124"/>
        <end position="152"/>
    </location>
</feature>
<feature type="transmembrane region" description="Helical" evidence="2">
    <location>
        <begin position="153"/>
        <end position="173"/>
    </location>
</feature>
<feature type="topological domain" description="Cytoplasmic" evidence="2">
    <location>
        <begin position="174"/>
        <end position="176"/>
    </location>
</feature>
<keyword id="KW-1003">Cell membrane</keyword>
<keyword id="KW-0472">Membrane</keyword>
<keyword id="KW-0812">Transmembrane</keyword>
<keyword id="KW-1133">Transmembrane helix</keyword>
<comment type="subunit">
    <text evidence="1">Homodimer and heterodimers.</text>
</comment>
<comment type="subcellular location">
    <subcellularLocation>
        <location evidence="1">Cell membrane</location>
        <topology evidence="1">Multi-pass membrane protein</topology>
    </subcellularLocation>
</comment>
<comment type="similarity">
    <text evidence="3">Belongs to the Casparian strip membrane proteins (CASP) family.</text>
</comment>
<accession>P0DI70</accession>
<name>CSPL2_GINBI</name>
<evidence type="ECO:0000250" key="1"/>
<evidence type="ECO:0000255" key="2"/>
<evidence type="ECO:0000305" key="3"/>